<keyword id="KW-0067">ATP-binding</keyword>
<keyword id="KW-1003">Cell membrane</keyword>
<keyword id="KW-0433">Leucine-rich repeat</keyword>
<keyword id="KW-0472">Membrane</keyword>
<keyword id="KW-0547">Nucleotide-binding</keyword>
<keyword id="KW-0597">Phosphoprotein</keyword>
<keyword id="KW-0675">Receptor</keyword>
<keyword id="KW-1185">Reference proteome</keyword>
<keyword id="KW-0677">Repeat</keyword>
<keyword id="KW-0732">Signal</keyword>
<keyword id="KW-0812">Transmembrane</keyword>
<keyword id="KW-1133">Transmembrane helix</keyword>
<protein>
    <recommendedName>
        <fullName>Probable inactive receptor kinase At1g48480</fullName>
    </recommendedName>
</protein>
<dbReference type="EMBL" id="AF084034">
    <property type="protein sequence ID" value="AAC95351.1"/>
    <property type="molecule type" value="Genomic_DNA"/>
</dbReference>
<dbReference type="EMBL" id="AC020889">
    <property type="protein sequence ID" value="AAF79696.1"/>
    <property type="molecule type" value="Genomic_DNA"/>
</dbReference>
<dbReference type="EMBL" id="CP002684">
    <property type="protein sequence ID" value="AEE32298.1"/>
    <property type="molecule type" value="Genomic_DNA"/>
</dbReference>
<dbReference type="EMBL" id="AK317608">
    <property type="protein sequence ID" value="BAH20271.1"/>
    <property type="molecule type" value="mRNA"/>
</dbReference>
<dbReference type="PIR" id="G96524">
    <property type="entry name" value="G96524"/>
</dbReference>
<dbReference type="RefSeq" id="NP_564528.1">
    <property type="nucleotide sequence ID" value="NM_103744.2"/>
</dbReference>
<dbReference type="SMR" id="Q9LP77"/>
<dbReference type="BioGRID" id="26494">
    <property type="interactions" value="28"/>
</dbReference>
<dbReference type="FunCoup" id="Q9LP77">
    <property type="interactions" value="683"/>
</dbReference>
<dbReference type="IntAct" id="Q9LP77">
    <property type="interactions" value="36"/>
</dbReference>
<dbReference type="STRING" id="3702.Q9LP77"/>
<dbReference type="iPTMnet" id="Q9LP77"/>
<dbReference type="SwissPalm" id="Q9LP77"/>
<dbReference type="PaxDb" id="3702-AT1G48480.1"/>
<dbReference type="ProteomicsDB" id="232384"/>
<dbReference type="EnsemblPlants" id="AT1G48480.1">
    <property type="protein sequence ID" value="AT1G48480.1"/>
    <property type="gene ID" value="AT1G48480"/>
</dbReference>
<dbReference type="GeneID" id="841269"/>
<dbReference type="Gramene" id="AT1G48480.1">
    <property type="protein sequence ID" value="AT1G48480.1"/>
    <property type="gene ID" value="AT1G48480"/>
</dbReference>
<dbReference type="KEGG" id="ath:AT1G48480"/>
<dbReference type="Araport" id="AT1G48480"/>
<dbReference type="TAIR" id="AT1G48480">
    <property type="gene designation" value="RKL1"/>
</dbReference>
<dbReference type="eggNOG" id="ENOG502QSFF">
    <property type="taxonomic scope" value="Eukaryota"/>
</dbReference>
<dbReference type="HOGENOM" id="CLU_000288_92_6_1"/>
<dbReference type="InParanoid" id="Q9LP77"/>
<dbReference type="OMA" id="QMAPMDM"/>
<dbReference type="PhylomeDB" id="Q9LP77"/>
<dbReference type="PRO" id="PR:Q9LP77"/>
<dbReference type="Proteomes" id="UP000006548">
    <property type="component" value="Chromosome 1"/>
</dbReference>
<dbReference type="ExpressionAtlas" id="Q9LP77">
    <property type="expression patterns" value="baseline and differential"/>
</dbReference>
<dbReference type="GO" id="GO:0005634">
    <property type="term" value="C:nucleus"/>
    <property type="evidence" value="ECO:0007005"/>
    <property type="project" value="TAIR"/>
</dbReference>
<dbReference type="GO" id="GO:0000325">
    <property type="term" value="C:plant-type vacuole"/>
    <property type="evidence" value="ECO:0007005"/>
    <property type="project" value="TAIR"/>
</dbReference>
<dbReference type="GO" id="GO:0005886">
    <property type="term" value="C:plasma membrane"/>
    <property type="evidence" value="ECO:0007005"/>
    <property type="project" value="TAIR"/>
</dbReference>
<dbReference type="GO" id="GO:0009506">
    <property type="term" value="C:plasmodesma"/>
    <property type="evidence" value="ECO:0007005"/>
    <property type="project" value="TAIR"/>
</dbReference>
<dbReference type="GO" id="GO:0005524">
    <property type="term" value="F:ATP binding"/>
    <property type="evidence" value="ECO:0007669"/>
    <property type="project" value="UniProtKB-KW"/>
</dbReference>
<dbReference type="GO" id="GO:0042802">
    <property type="term" value="F:identical protein binding"/>
    <property type="evidence" value="ECO:0000353"/>
    <property type="project" value="IntAct"/>
</dbReference>
<dbReference type="GO" id="GO:0004672">
    <property type="term" value="F:protein kinase activity"/>
    <property type="evidence" value="ECO:0007669"/>
    <property type="project" value="InterPro"/>
</dbReference>
<dbReference type="CDD" id="cd14066">
    <property type="entry name" value="STKc_IRAK"/>
    <property type="match status" value="1"/>
</dbReference>
<dbReference type="FunFam" id="3.30.200.20:FF:000307">
    <property type="entry name" value="pollen receptor-like kinase 1"/>
    <property type="match status" value="1"/>
</dbReference>
<dbReference type="FunFam" id="1.10.510.10:FF:000585">
    <property type="entry name" value="Probable inactive receptor kinase At1g48480"/>
    <property type="match status" value="1"/>
</dbReference>
<dbReference type="FunFam" id="3.80.10.10:FF:000234">
    <property type="entry name" value="Probable inactive receptor kinase RLK902"/>
    <property type="match status" value="1"/>
</dbReference>
<dbReference type="Gene3D" id="3.30.200.20">
    <property type="entry name" value="Phosphorylase Kinase, domain 1"/>
    <property type="match status" value="1"/>
</dbReference>
<dbReference type="Gene3D" id="3.80.10.10">
    <property type="entry name" value="Ribonuclease Inhibitor"/>
    <property type="match status" value="1"/>
</dbReference>
<dbReference type="Gene3D" id="1.10.510.10">
    <property type="entry name" value="Transferase(Phosphotransferase) domain 1"/>
    <property type="match status" value="1"/>
</dbReference>
<dbReference type="InterPro" id="IPR050994">
    <property type="entry name" value="At_inactive_RLKs"/>
</dbReference>
<dbReference type="InterPro" id="IPR011009">
    <property type="entry name" value="Kinase-like_dom_sf"/>
</dbReference>
<dbReference type="InterPro" id="IPR001611">
    <property type="entry name" value="Leu-rich_rpt"/>
</dbReference>
<dbReference type="InterPro" id="IPR032675">
    <property type="entry name" value="LRR_dom_sf"/>
</dbReference>
<dbReference type="InterPro" id="IPR013210">
    <property type="entry name" value="LRR_N_plant-typ"/>
</dbReference>
<dbReference type="InterPro" id="IPR000719">
    <property type="entry name" value="Prot_kinase_dom"/>
</dbReference>
<dbReference type="InterPro" id="IPR017441">
    <property type="entry name" value="Protein_kinase_ATP_BS"/>
</dbReference>
<dbReference type="InterPro" id="IPR001245">
    <property type="entry name" value="Ser-Thr/Tyr_kinase_cat_dom"/>
</dbReference>
<dbReference type="PANTHER" id="PTHR48010">
    <property type="entry name" value="OS05G0588300 PROTEIN"/>
    <property type="match status" value="1"/>
</dbReference>
<dbReference type="PANTHER" id="PTHR48010:SF85">
    <property type="entry name" value="PROTEIN KINASE DOMAIN-CONTAINING PROTEIN"/>
    <property type="match status" value="1"/>
</dbReference>
<dbReference type="Pfam" id="PF00560">
    <property type="entry name" value="LRR_1"/>
    <property type="match status" value="2"/>
</dbReference>
<dbReference type="Pfam" id="PF13855">
    <property type="entry name" value="LRR_8"/>
    <property type="match status" value="1"/>
</dbReference>
<dbReference type="Pfam" id="PF08263">
    <property type="entry name" value="LRRNT_2"/>
    <property type="match status" value="1"/>
</dbReference>
<dbReference type="Pfam" id="PF07714">
    <property type="entry name" value="PK_Tyr_Ser-Thr"/>
    <property type="match status" value="1"/>
</dbReference>
<dbReference type="SUPFAM" id="SSF52058">
    <property type="entry name" value="L domain-like"/>
    <property type="match status" value="1"/>
</dbReference>
<dbReference type="SUPFAM" id="SSF56112">
    <property type="entry name" value="Protein kinase-like (PK-like)"/>
    <property type="match status" value="1"/>
</dbReference>
<dbReference type="PROSITE" id="PS51450">
    <property type="entry name" value="LRR"/>
    <property type="match status" value="4"/>
</dbReference>
<dbReference type="PROSITE" id="PS00107">
    <property type="entry name" value="PROTEIN_KINASE_ATP"/>
    <property type="match status" value="1"/>
</dbReference>
<dbReference type="PROSITE" id="PS50011">
    <property type="entry name" value="PROTEIN_KINASE_DOM"/>
    <property type="match status" value="1"/>
</dbReference>
<comment type="interaction">
    <interactant intactId="EBI-1544507">
        <id>Q9LP77</id>
    </interactant>
    <interactant intactId="EBI-20654480">
        <id>C0LGR6</id>
        <label>At4g29180</label>
    </interactant>
    <organismsDiffer>false</organismsDiffer>
    <experiments>2</experiments>
</comment>
<comment type="interaction">
    <interactant intactId="EBI-1544507">
        <id>Q9LP77</id>
    </interactant>
    <interactant intactId="EBI-17123993">
        <id>Q9LT96</id>
        <label>At5g49770</label>
    </interactant>
    <organismsDiffer>false</organismsDiffer>
    <experiments>3</experiments>
</comment>
<comment type="interaction">
    <interactant intactId="EBI-1544507">
        <id>Q9LP77</id>
    </interactant>
    <interactant intactId="EBI-20652801">
        <id>C0LGN2</id>
        <label>LRR-RLK</label>
    </interactant>
    <organismsDiffer>false</organismsDiffer>
    <experiments>3</experiments>
</comment>
<comment type="interaction">
    <interactant intactId="EBI-1544507">
        <id>Q9LP77</id>
    </interactant>
    <interactant intactId="EBI-17071528">
        <id>Q9FRI1</id>
        <label>LRR-RLK</label>
    </interactant>
    <organismsDiffer>false</organismsDiffer>
    <experiments>2</experiments>
</comment>
<comment type="interaction">
    <interactant intactId="EBI-1544507">
        <id>Q9LP77</id>
    </interactant>
    <interactant intactId="EBI-16955556">
        <id>Q8GX94</id>
        <label>MQB2.1</label>
    </interactant>
    <organismsDiffer>false</organismsDiffer>
    <experiments>2</experiments>
</comment>
<comment type="interaction">
    <interactant intactId="EBI-1544507">
        <id>Q9LP77</id>
    </interactant>
    <interactant intactId="EBI-1238236">
        <id>F4K6B8</id>
        <label>RGI4</label>
    </interactant>
    <organismsDiffer>false</organismsDiffer>
    <experiments>2</experiments>
</comment>
<comment type="interaction">
    <interactant intactId="EBI-1544507">
        <id>Q9LP77</id>
    </interactant>
    <interactant intactId="EBI-1544507">
        <id>Q9LP77</id>
        <label>RKL1</label>
    </interactant>
    <organismsDiffer>false</organismsDiffer>
    <experiments>2</experiments>
</comment>
<comment type="interaction">
    <interactant intactId="EBI-1544507">
        <id>Q9LP77</id>
    </interactant>
    <interactant intactId="EBI-20652836">
        <id>Q9FYK0</id>
        <label>TMK2</label>
    </interactant>
    <organismsDiffer>false</organismsDiffer>
    <experiments>3</experiments>
</comment>
<comment type="subcellular location">
    <subcellularLocation>
        <location evidence="8">Cell membrane</location>
        <topology evidence="8">Single-pass membrane protein</topology>
    </subcellularLocation>
</comment>
<comment type="tissue specificity">
    <text evidence="6 7">Highly expressed in seedlings and leaves. Lower expression in roots, stems, flowers and siliques. Detected in the vascular tissues of roots, in the trichomes of young rosettes leaves and hydathodes, in the floral abscission zones, in filament apex and stomata cells of anthers, in inflorescence stems and in sepals.</text>
</comment>
<comment type="induction">
    <text>By not induced by salicylic acid.</text>
</comment>
<comment type="domain">
    <text>The protein kinase domain is predicted to be catalytically inactive.</text>
</comment>
<comment type="disruption phenotype">
    <text evidence="7">No visible phenotype. Probably due to the redundancy with other receptor-like kinases.</text>
</comment>
<comment type="similarity">
    <text evidence="8">Belongs to the protein kinase superfamily.</text>
</comment>
<gene>
    <name type="primary">RKL1</name>
    <name type="ordered locus">At1g48480</name>
    <name type="ORF">T1N15.9</name>
</gene>
<accession>Q9LP77</accession>
<accession>B9DHQ4</accession>
<accession>Q9ZT08</accession>
<reference key="1">
    <citation type="journal article" date="2000" name="Nature">
        <title>Sequence and analysis of chromosome 1 of the plant Arabidopsis thaliana.</title>
        <authorList>
            <person name="Theologis A."/>
            <person name="Ecker J.R."/>
            <person name="Palm C.J."/>
            <person name="Federspiel N.A."/>
            <person name="Kaul S."/>
            <person name="White O."/>
            <person name="Alonso J."/>
            <person name="Altafi H."/>
            <person name="Araujo R."/>
            <person name="Bowman C.L."/>
            <person name="Brooks S.Y."/>
            <person name="Buehler E."/>
            <person name="Chan A."/>
            <person name="Chao Q."/>
            <person name="Chen H."/>
            <person name="Cheuk R.F."/>
            <person name="Chin C.W."/>
            <person name="Chung M.K."/>
            <person name="Conn L."/>
            <person name="Conway A.B."/>
            <person name="Conway A.R."/>
            <person name="Creasy T.H."/>
            <person name="Dewar K."/>
            <person name="Dunn P."/>
            <person name="Etgu P."/>
            <person name="Feldblyum T.V."/>
            <person name="Feng J.-D."/>
            <person name="Fong B."/>
            <person name="Fujii C.Y."/>
            <person name="Gill J.E."/>
            <person name="Goldsmith A.D."/>
            <person name="Haas B."/>
            <person name="Hansen N.F."/>
            <person name="Hughes B."/>
            <person name="Huizar L."/>
            <person name="Hunter J.L."/>
            <person name="Jenkins J."/>
            <person name="Johnson-Hopson C."/>
            <person name="Khan S."/>
            <person name="Khaykin E."/>
            <person name="Kim C.J."/>
            <person name="Koo H.L."/>
            <person name="Kremenetskaia I."/>
            <person name="Kurtz D.B."/>
            <person name="Kwan A."/>
            <person name="Lam B."/>
            <person name="Langin-Hooper S."/>
            <person name="Lee A."/>
            <person name="Lee J.M."/>
            <person name="Lenz C.A."/>
            <person name="Li J.H."/>
            <person name="Li Y.-P."/>
            <person name="Lin X."/>
            <person name="Liu S.X."/>
            <person name="Liu Z.A."/>
            <person name="Luros J.S."/>
            <person name="Maiti R."/>
            <person name="Marziali A."/>
            <person name="Militscher J."/>
            <person name="Miranda M."/>
            <person name="Nguyen M."/>
            <person name="Nierman W.C."/>
            <person name="Osborne B.I."/>
            <person name="Pai G."/>
            <person name="Peterson J."/>
            <person name="Pham P.K."/>
            <person name="Rizzo M."/>
            <person name="Rooney T."/>
            <person name="Rowley D."/>
            <person name="Sakano H."/>
            <person name="Salzberg S.L."/>
            <person name="Schwartz J.R."/>
            <person name="Shinn P."/>
            <person name="Southwick A.M."/>
            <person name="Sun H."/>
            <person name="Tallon L.J."/>
            <person name="Tambunga G."/>
            <person name="Toriumi M.J."/>
            <person name="Town C.D."/>
            <person name="Utterback T."/>
            <person name="Van Aken S."/>
            <person name="Vaysberg M."/>
            <person name="Vysotskaia V.S."/>
            <person name="Walker M."/>
            <person name="Wu D."/>
            <person name="Yu G."/>
            <person name="Fraser C.M."/>
            <person name="Venter J.C."/>
            <person name="Davis R.W."/>
        </authorList>
    </citation>
    <scope>NUCLEOTIDE SEQUENCE [LARGE SCALE GENOMIC DNA]</scope>
    <source>
        <strain>cv. Columbia</strain>
    </source>
</reference>
<reference key="2">
    <citation type="journal article" date="2017" name="Plant J.">
        <title>Araport11: a complete reannotation of the Arabidopsis thaliana reference genome.</title>
        <authorList>
            <person name="Cheng C.Y."/>
            <person name="Krishnakumar V."/>
            <person name="Chan A.P."/>
            <person name="Thibaud-Nissen F."/>
            <person name="Schobel S."/>
            <person name="Town C.D."/>
        </authorList>
    </citation>
    <scope>GENOME REANNOTATION</scope>
    <source>
        <strain>cv. Columbia</strain>
    </source>
</reference>
<reference key="3">
    <citation type="journal article" date="2000" name="Plant Cell Physiol.">
        <title>Salicylic acid induces the expression of a number of receptor-like kinase genes in Arabidopsis thaliana.</title>
        <authorList>
            <person name="Ohtake Y."/>
            <person name="Takahashi T."/>
            <person name="Komeda Y."/>
        </authorList>
    </citation>
    <scope>NUCLEOTIDE SEQUENCE [GENOMIC DNA] OF 11-655</scope>
    <scope>TISSUE SPECIFICITY</scope>
    <scope>LACK OF INDUCTION</scope>
</reference>
<reference key="4">
    <citation type="journal article" date="2009" name="DNA Res.">
        <title>Analysis of multiple occurrences of alternative splicing events in Arabidopsis thaliana using novel sequenced full-length cDNAs.</title>
        <authorList>
            <person name="Iida K."/>
            <person name="Fukami-Kobayashi K."/>
            <person name="Toyoda A."/>
            <person name="Sakaki Y."/>
            <person name="Kobayashi M."/>
            <person name="Seki M."/>
            <person name="Shinozaki K."/>
        </authorList>
    </citation>
    <scope>NUCLEOTIDE SEQUENCE [LARGE SCALE MRNA] OF 256-655</scope>
    <source>
        <strain>cv. Columbia</strain>
    </source>
</reference>
<reference key="5">
    <citation type="journal article" date="2004" name="Biosci. Biotechnol. Biochem.">
        <title>Molecular characterization of two highly homologous receptor-like kinase genes, RLK902 and RKL1, in Arabidopsis thaliana.</title>
        <authorList>
            <person name="Tarutani Y."/>
            <person name="Morimoto T."/>
            <person name="Sasaki A."/>
            <person name="Yasuda M."/>
            <person name="Nakashita H."/>
            <person name="Yoshida S."/>
            <person name="Yamaguchi I."/>
            <person name="Suzuki Y."/>
        </authorList>
    </citation>
    <scope>TISSUE SPECIFICITY</scope>
    <scope>DISRUPTION PHENOTYPE</scope>
    <source>
        <strain>cv. Columbia</strain>
    </source>
</reference>
<feature type="signal peptide" evidence="3">
    <location>
        <begin position="1"/>
        <end position="32"/>
    </location>
</feature>
<feature type="chain" id="PRO_0000324843" description="Probable inactive receptor kinase At1g48480">
    <location>
        <begin position="33"/>
        <end position="655"/>
    </location>
</feature>
<feature type="transmembrane region" description="Helical" evidence="3">
    <location>
        <begin position="269"/>
        <end position="289"/>
    </location>
</feature>
<feature type="repeat" description="LRR 1">
    <location>
        <begin position="71"/>
        <end position="95"/>
    </location>
</feature>
<feature type="repeat" description="LRR 2">
    <location>
        <begin position="98"/>
        <end position="120"/>
    </location>
</feature>
<feature type="repeat" description="LRR 3">
    <location>
        <begin position="122"/>
        <end position="144"/>
    </location>
</feature>
<feature type="repeat" description="LRR 4">
    <location>
        <begin position="146"/>
        <end position="169"/>
    </location>
</feature>
<feature type="repeat" description="LRR 5">
    <location>
        <begin position="170"/>
        <end position="192"/>
    </location>
</feature>
<feature type="repeat" description="LRR 6">
    <location>
        <begin position="194"/>
        <end position="215"/>
    </location>
</feature>
<feature type="domain" description="Protein kinase" evidence="4">
    <location>
        <begin position="371"/>
        <end position="646"/>
    </location>
</feature>
<feature type="region of interest" description="Disordered" evidence="5">
    <location>
        <begin position="234"/>
        <end position="260"/>
    </location>
</feature>
<feature type="compositionally biased region" description="Polar residues" evidence="5">
    <location>
        <begin position="237"/>
        <end position="249"/>
    </location>
</feature>
<feature type="binding site" evidence="4">
    <location>
        <begin position="377"/>
        <end position="385"/>
    </location>
    <ligand>
        <name>ATP</name>
        <dbReference type="ChEBI" id="CHEBI:30616"/>
    </ligand>
</feature>
<feature type="binding site" evidence="4">
    <location>
        <position position="399"/>
    </location>
    <ligand>
        <name>ATP</name>
        <dbReference type="ChEBI" id="CHEBI:30616"/>
    </ligand>
</feature>
<feature type="modified residue" description="Phosphoserine" evidence="2">
    <location>
        <position position="373"/>
    </location>
</feature>
<feature type="modified residue" description="Phosphothreonine" evidence="2">
    <location>
        <position position="394"/>
    </location>
</feature>
<feature type="modified residue" description="Phosphoserine" evidence="1">
    <location>
        <position position="450"/>
    </location>
</feature>
<feature type="modified residue" description="Phosphothreonine" evidence="2">
    <location>
        <position position="526"/>
    </location>
</feature>
<feature type="modified residue" description="Phosphoserine" evidence="1">
    <location>
        <position position="546"/>
    </location>
</feature>
<feature type="modified residue" description="Phosphothreonine" evidence="1">
    <location>
        <position position="622"/>
    </location>
</feature>
<feature type="sequence conflict" description="In Ref. 3; AAC95351." evidence="8" ref="3">
    <original>D</original>
    <variation>N</variation>
    <location>
        <position position="483"/>
    </location>
</feature>
<proteinExistence type="evidence at protein level"/>
<name>Y1848_ARATH</name>
<organism>
    <name type="scientific">Arabidopsis thaliana</name>
    <name type="common">Mouse-ear cress</name>
    <dbReference type="NCBI Taxonomy" id="3702"/>
    <lineage>
        <taxon>Eukaryota</taxon>
        <taxon>Viridiplantae</taxon>
        <taxon>Streptophyta</taxon>
        <taxon>Embryophyta</taxon>
        <taxon>Tracheophyta</taxon>
        <taxon>Spermatophyta</taxon>
        <taxon>Magnoliopsida</taxon>
        <taxon>eudicotyledons</taxon>
        <taxon>Gunneridae</taxon>
        <taxon>Pentapetalae</taxon>
        <taxon>rosids</taxon>
        <taxon>malvids</taxon>
        <taxon>Brassicales</taxon>
        <taxon>Brassicaceae</taxon>
        <taxon>Camelineae</taxon>
        <taxon>Arabidopsis</taxon>
    </lineage>
</organism>
<sequence>MRVFFFPNSSMAILSVFLSLLLLSLPLPSTQDLNADRTALLSLRSAVGGRTFRWNIKQTSPCNWAGVKCESNRVTALRLPGVALSGDIPEGIFGNLTQLRTLSLRLNALSGSLPKDLSTSSNLRHLYLQGNRFSGEIPEVLFSLSHLVRLNLASNSFTGEISSGFTNLTKLKTLFLENNQLSGSIPDLDLPLVQFNVSNNSLNGSIPKNLQRFESDSFLQTSLCGKPLKLCPDEETVPSQPTSGGNRTPPSVEGSEEKKKKNKLSGGAIAGIVIGCVVGFALIVLILMVLCRKKSNKRSRAVDISTIKQQEPEIPGDKEAVDNGNVYSVSAAAAAAMTGNGKASEGNGPATKKLVFFGNATKVFDLEDLLRASAEVLGKGTFGTAYKAVLDAVTVVAVKRLKDVMMADKEFKEKIELVGAMDHENLVPLRAYYFSRDEKLLVYDFMPMGSLSALLHGNRGAGRSPLNWDVRSRIAIGAARGLDYLHSQGTSTSHGNIKSSNILLTKSHDAKVSDFGLAQLVGSSATNPNRATGYRAPEVTDPKRVSQKGDVYSFGVVLLELITGKAPSNSVMNEEGVDLPRWVKSVARDEWRREVFDSELLSLATDEEEMMAEMVQLGLECTSQHPDQRPEMSEVVRKMENLRPYSGSDQVNEAD</sequence>
<evidence type="ECO:0000250" key="1">
    <source>
        <dbReference type="UniProtKB" id="Q94AG2"/>
    </source>
</evidence>
<evidence type="ECO:0000250" key="2">
    <source>
        <dbReference type="UniProtKB" id="Q94F62"/>
    </source>
</evidence>
<evidence type="ECO:0000255" key="3"/>
<evidence type="ECO:0000255" key="4">
    <source>
        <dbReference type="PROSITE-ProRule" id="PRU00159"/>
    </source>
</evidence>
<evidence type="ECO:0000256" key="5">
    <source>
        <dbReference type="SAM" id="MobiDB-lite"/>
    </source>
</evidence>
<evidence type="ECO:0000269" key="6">
    <source>
    </source>
</evidence>
<evidence type="ECO:0000269" key="7">
    <source>
    </source>
</evidence>
<evidence type="ECO:0000305" key="8"/>